<sequence>MRRNSERPVRITEVCLRDGSHVMKHQFTEEQVRFVTRALDEAGMHYIEVSHGDGLGGSTLQYGKSLVNEMKLIEAAVDECKQAQIAVLLIPGIGTIHELKQAANIGAKLVRVATHVTEADVSAQHIQFARELGMEVCGFLMMAHSASVEKLVEQAKLMESYGAEAVYVTDSAGALLPHEVRERIRALRQSLNIEIGFHGHNNLSVAVANTITAIEEGATRIDGSVRCLGAGAGNAQTEVLLAVLDRMGYKLDIDLYKMMDVAEEVVAPLLPVPQEIQKGSLVMGYAGVYSSFLLHAERAAQRFNVDARDILIELGKRKVVGGQEDMILDVAAELAKIKMEV</sequence>
<name>HOA_BACAH</name>
<proteinExistence type="inferred from homology"/>
<organism>
    <name type="scientific">Bacillus thuringiensis (strain Al Hakam)</name>
    <dbReference type="NCBI Taxonomy" id="412694"/>
    <lineage>
        <taxon>Bacteria</taxon>
        <taxon>Bacillati</taxon>
        <taxon>Bacillota</taxon>
        <taxon>Bacilli</taxon>
        <taxon>Bacillales</taxon>
        <taxon>Bacillaceae</taxon>
        <taxon>Bacillus</taxon>
        <taxon>Bacillus cereus group</taxon>
    </lineage>
</organism>
<feature type="chain" id="PRO_0000387791" description="4-hydroxy-2-oxovalerate aldolase">
    <location>
        <begin position="1"/>
        <end position="341"/>
    </location>
</feature>
<feature type="domain" description="Pyruvate carboxyltransferase" evidence="1">
    <location>
        <begin position="9"/>
        <end position="259"/>
    </location>
</feature>
<feature type="active site" description="Proton acceptor" evidence="1">
    <location>
        <position position="21"/>
    </location>
</feature>
<feature type="binding site" evidence="1">
    <location>
        <begin position="17"/>
        <end position="18"/>
    </location>
    <ligand>
        <name>substrate</name>
    </ligand>
</feature>
<feature type="binding site" evidence="1">
    <location>
        <position position="18"/>
    </location>
    <ligand>
        <name>Mn(2+)</name>
        <dbReference type="ChEBI" id="CHEBI:29035"/>
    </ligand>
</feature>
<feature type="binding site" evidence="1">
    <location>
        <position position="171"/>
    </location>
    <ligand>
        <name>substrate</name>
    </ligand>
</feature>
<feature type="binding site" evidence="1">
    <location>
        <position position="198"/>
    </location>
    <ligand>
        <name>Mn(2+)</name>
        <dbReference type="ChEBI" id="CHEBI:29035"/>
    </ligand>
</feature>
<feature type="binding site" evidence="1">
    <location>
        <position position="198"/>
    </location>
    <ligand>
        <name>substrate</name>
    </ligand>
</feature>
<feature type="binding site" evidence="1">
    <location>
        <position position="200"/>
    </location>
    <ligand>
        <name>Mn(2+)</name>
        <dbReference type="ChEBI" id="CHEBI:29035"/>
    </ligand>
</feature>
<feature type="binding site" evidence="1">
    <location>
        <position position="289"/>
    </location>
    <ligand>
        <name>substrate</name>
    </ligand>
</feature>
<feature type="site" description="Transition state stabilizer" evidence="1">
    <location>
        <position position="17"/>
    </location>
</feature>
<evidence type="ECO:0000255" key="1">
    <source>
        <dbReference type="HAMAP-Rule" id="MF_01656"/>
    </source>
</evidence>
<protein>
    <recommendedName>
        <fullName evidence="1">4-hydroxy-2-oxovalerate aldolase</fullName>
        <shortName evidence="1">HOA</shortName>
        <ecNumber evidence="1">4.1.3.39</ecNumber>
    </recommendedName>
    <alternativeName>
        <fullName evidence="1">4-hydroxy-2-keto-pentanoic acid aldolase</fullName>
    </alternativeName>
    <alternativeName>
        <fullName evidence="1">4-hydroxy-2-oxopentanoate aldolase</fullName>
    </alternativeName>
</protein>
<keyword id="KW-0058">Aromatic hydrocarbons catabolism</keyword>
<keyword id="KW-0456">Lyase</keyword>
<keyword id="KW-0464">Manganese</keyword>
<keyword id="KW-0479">Metal-binding</keyword>
<accession>A0RD70</accession>
<dbReference type="EC" id="4.1.3.39" evidence="1"/>
<dbReference type="EMBL" id="CP000485">
    <property type="protein sequence ID" value="ABK85163.1"/>
    <property type="molecule type" value="Genomic_DNA"/>
</dbReference>
<dbReference type="SMR" id="A0RD70"/>
<dbReference type="KEGG" id="btl:BALH_1844"/>
<dbReference type="HOGENOM" id="CLU_049173_0_0_9"/>
<dbReference type="GO" id="GO:0003852">
    <property type="term" value="F:2-isopropylmalate synthase activity"/>
    <property type="evidence" value="ECO:0007669"/>
    <property type="project" value="TreeGrafter"/>
</dbReference>
<dbReference type="GO" id="GO:0008701">
    <property type="term" value="F:4-hydroxy-2-oxovalerate aldolase activity"/>
    <property type="evidence" value="ECO:0007669"/>
    <property type="project" value="UniProtKB-UniRule"/>
</dbReference>
<dbReference type="GO" id="GO:0030145">
    <property type="term" value="F:manganese ion binding"/>
    <property type="evidence" value="ECO:0007669"/>
    <property type="project" value="UniProtKB-UniRule"/>
</dbReference>
<dbReference type="GO" id="GO:0009056">
    <property type="term" value="P:catabolic process"/>
    <property type="evidence" value="ECO:0007669"/>
    <property type="project" value="UniProtKB-KW"/>
</dbReference>
<dbReference type="GO" id="GO:0009098">
    <property type="term" value="P:L-leucine biosynthetic process"/>
    <property type="evidence" value="ECO:0007669"/>
    <property type="project" value="TreeGrafter"/>
</dbReference>
<dbReference type="CDD" id="cd07943">
    <property type="entry name" value="DRE_TIM_HOA"/>
    <property type="match status" value="1"/>
</dbReference>
<dbReference type="Gene3D" id="1.10.8.60">
    <property type="match status" value="1"/>
</dbReference>
<dbReference type="Gene3D" id="3.20.20.70">
    <property type="entry name" value="Aldolase class I"/>
    <property type="match status" value="1"/>
</dbReference>
<dbReference type="HAMAP" id="MF_01656">
    <property type="entry name" value="HOA"/>
    <property type="match status" value="1"/>
</dbReference>
<dbReference type="InterPro" id="IPR050073">
    <property type="entry name" value="2-IPM_HCS-like"/>
</dbReference>
<dbReference type="InterPro" id="IPR017629">
    <property type="entry name" value="4OH_2_O-val_aldolase"/>
</dbReference>
<dbReference type="InterPro" id="IPR013785">
    <property type="entry name" value="Aldolase_TIM"/>
</dbReference>
<dbReference type="InterPro" id="IPR012425">
    <property type="entry name" value="DmpG_comm"/>
</dbReference>
<dbReference type="InterPro" id="IPR035685">
    <property type="entry name" value="DRE_TIM_HOA"/>
</dbReference>
<dbReference type="InterPro" id="IPR000891">
    <property type="entry name" value="PYR_CT"/>
</dbReference>
<dbReference type="NCBIfam" id="TIGR03217">
    <property type="entry name" value="4OH_2_O_val_ald"/>
    <property type="match status" value="1"/>
</dbReference>
<dbReference type="NCBIfam" id="NF006049">
    <property type="entry name" value="PRK08195.1"/>
    <property type="match status" value="1"/>
</dbReference>
<dbReference type="PANTHER" id="PTHR10277:SF9">
    <property type="entry name" value="2-ISOPROPYLMALATE SYNTHASE 1, CHLOROPLASTIC-RELATED"/>
    <property type="match status" value="1"/>
</dbReference>
<dbReference type="PANTHER" id="PTHR10277">
    <property type="entry name" value="HOMOCITRATE SYNTHASE-RELATED"/>
    <property type="match status" value="1"/>
</dbReference>
<dbReference type="Pfam" id="PF07836">
    <property type="entry name" value="DmpG_comm"/>
    <property type="match status" value="1"/>
</dbReference>
<dbReference type="Pfam" id="PF00682">
    <property type="entry name" value="HMGL-like"/>
    <property type="match status" value="1"/>
</dbReference>
<dbReference type="SUPFAM" id="SSF51569">
    <property type="entry name" value="Aldolase"/>
    <property type="match status" value="1"/>
</dbReference>
<dbReference type="SUPFAM" id="SSF89000">
    <property type="entry name" value="post-HMGL domain-like"/>
    <property type="match status" value="1"/>
</dbReference>
<dbReference type="PROSITE" id="PS50991">
    <property type="entry name" value="PYR_CT"/>
    <property type="match status" value="1"/>
</dbReference>
<comment type="catalytic activity">
    <reaction evidence="1">
        <text>(S)-4-hydroxy-2-oxopentanoate = acetaldehyde + pyruvate</text>
        <dbReference type="Rhea" id="RHEA:22624"/>
        <dbReference type="ChEBI" id="CHEBI:15343"/>
        <dbReference type="ChEBI" id="CHEBI:15361"/>
        <dbReference type="ChEBI" id="CHEBI:73143"/>
        <dbReference type="EC" id="4.1.3.39"/>
    </reaction>
</comment>
<comment type="similarity">
    <text evidence="1">Belongs to the 4-hydroxy-2-oxovalerate aldolase family.</text>
</comment>
<gene>
    <name type="ordered locus">BALH_1844</name>
</gene>
<reference key="1">
    <citation type="journal article" date="2007" name="J. Bacteriol.">
        <title>The complete genome sequence of Bacillus thuringiensis Al Hakam.</title>
        <authorList>
            <person name="Challacombe J.F."/>
            <person name="Altherr M.R."/>
            <person name="Xie G."/>
            <person name="Bhotika S.S."/>
            <person name="Brown N."/>
            <person name="Bruce D."/>
            <person name="Campbell C.S."/>
            <person name="Campbell M.L."/>
            <person name="Chen J."/>
            <person name="Chertkov O."/>
            <person name="Cleland C."/>
            <person name="Dimitrijevic M."/>
            <person name="Doggett N.A."/>
            <person name="Fawcett J.J."/>
            <person name="Glavina T."/>
            <person name="Goodwin L.A."/>
            <person name="Green L.D."/>
            <person name="Han C.S."/>
            <person name="Hill K.K."/>
            <person name="Hitchcock P."/>
            <person name="Jackson P.J."/>
            <person name="Keim P."/>
            <person name="Kewalramani A.R."/>
            <person name="Longmire J."/>
            <person name="Lucas S."/>
            <person name="Malfatti S."/>
            <person name="Martinez D."/>
            <person name="McMurry K."/>
            <person name="Meincke L.J."/>
            <person name="Misra M."/>
            <person name="Moseman B.L."/>
            <person name="Mundt M."/>
            <person name="Munk A.C."/>
            <person name="Okinaka R.T."/>
            <person name="Parson-Quintana B."/>
            <person name="Reilly L.P."/>
            <person name="Richardson P."/>
            <person name="Robinson D.L."/>
            <person name="Saunders E."/>
            <person name="Tapia R."/>
            <person name="Tesmer J.G."/>
            <person name="Thayer N."/>
            <person name="Thompson L.S."/>
            <person name="Tice H."/>
            <person name="Ticknor L.O."/>
            <person name="Wills P.L."/>
            <person name="Gilna P."/>
            <person name="Brettin T.S."/>
        </authorList>
    </citation>
    <scope>NUCLEOTIDE SEQUENCE [LARGE SCALE GENOMIC DNA]</scope>
    <source>
        <strain>Al Hakam</strain>
    </source>
</reference>